<accession>Q58DC0</accession>
<accession>A3KMY3</accession>
<sequence length="313" mass="35410">MSTAEAGGVFHRARGRTLDAFSSEKEREWKGPFYFIQGADPQFGLMKAWATGDCDNGGDEWEQEIRLAEQAVQAINKLNPKPKFFVLCGDLVHAMPGRPWRKEQTEDLQRVLRTVDSDIPLVLVSGNHDVGNVPTPETIAEFQRTWGDDYFSFWVGGVLFLVLNSQFLYDASRCPALKQEHDHWLDQQLRIAGQRACRHAVVFQHIPLFLQSIGEDDDYFNLTKSVRKEMADKFVEAGVKAVFSGHYHRNAGGTYRNLDMVVSSAIGCQLGTDTHGLRVVVVTAEKITHRYYSLDELSEKGIEDDLMDLLKEN</sequence>
<feature type="chain" id="PRO_0000320555" description="Serine/threonine-protein phosphatase CPPED1">
    <location>
        <begin position="1"/>
        <end position="313"/>
    </location>
</feature>
<feature type="region of interest" description="Catalytic" evidence="1">
    <location>
        <begin position="47"/>
        <end position="250"/>
    </location>
</feature>
<feature type="binding site" evidence="1">
    <location>
        <position position="53"/>
    </location>
    <ligand>
        <name>a divalent metal cation</name>
        <dbReference type="ChEBI" id="CHEBI:60240"/>
        <label>1</label>
    </ligand>
</feature>
<feature type="binding site" evidence="1">
    <location>
        <position position="90"/>
    </location>
    <ligand>
        <name>a divalent metal cation</name>
        <dbReference type="ChEBI" id="CHEBI:60240"/>
        <label>1</label>
    </ligand>
</feature>
<feature type="binding site" evidence="1">
    <location>
        <position position="90"/>
    </location>
    <ligand>
        <name>a divalent metal cation</name>
        <dbReference type="ChEBI" id="CHEBI:60240"/>
        <label>2</label>
    </ligand>
</feature>
<feature type="binding site" evidence="1">
    <location>
        <position position="127"/>
    </location>
    <ligand>
        <name>a divalent metal cation</name>
        <dbReference type="ChEBI" id="CHEBI:60240"/>
        <label>2</label>
    </ligand>
</feature>
<feature type="binding site" evidence="1">
    <location>
        <position position="246"/>
    </location>
    <ligand>
        <name>a divalent metal cation</name>
        <dbReference type="ChEBI" id="CHEBI:60240"/>
        <label>2</label>
    </ligand>
</feature>
<feature type="modified residue" description="Phosphoserine" evidence="2">
    <location>
        <position position="2"/>
    </location>
</feature>
<feature type="modified residue" description="Phosphoserine" evidence="2">
    <location>
        <position position="293"/>
    </location>
</feature>
<feature type="splice variant" id="VSP_031657" description="In isoform 2." evidence="3">
    <original>VKAVFSGHYHRNAGGTYRNLDMVVSSAIGCQLGTDTHGLRVVVVTAEKITHRYYSLDELSEKGIEDDLMDLLKE</original>
    <variation>TCVHAHTHKMKMPYHQRSPVPVAPCASPARTAHFSSWEPLRFSFPEKWRILSSFPALSVTWQDSSCDNCYVSFWP</variation>
    <location>
        <begin position="239"/>
        <end position="312"/>
    </location>
</feature>
<feature type="sequence conflict" description="In Ref. 2; AAI33401." evidence="4" ref="2">
    <original>I</original>
    <variation>T</variation>
    <location>
        <position position="191"/>
    </location>
</feature>
<reference key="1">
    <citation type="journal article" date="2005" name="BMC Genomics">
        <title>Characterization of 954 bovine full-CDS cDNA sequences.</title>
        <authorList>
            <person name="Harhay G.P."/>
            <person name="Sonstegard T.S."/>
            <person name="Keele J.W."/>
            <person name="Heaton M.P."/>
            <person name="Clawson M.L."/>
            <person name="Snelling W.M."/>
            <person name="Wiedmann R.T."/>
            <person name="Van Tassell C.P."/>
            <person name="Smith T.P.L."/>
        </authorList>
    </citation>
    <scope>NUCLEOTIDE SEQUENCE [LARGE SCALE MRNA] (ISOFORM 1)</scope>
</reference>
<reference key="2">
    <citation type="submission" date="2007-02" db="EMBL/GenBank/DDBJ databases">
        <authorList>
            <consortium name="NIH - Mammalian Gene Collection (MGC) project"/>
        </authorList>
    </citation>
    <scope>NUCLEOTIDE SEQUENCE [LARGE SCALE MRNA] (ISOFORM 2)</scope>
    <source>
        <strain>Hereford</strain>
        <tissue>Ascending colon</tissue>
    </source>
</reference>
<gene>
    <name type="primary">CPPED1</name>
    <name type="synonym">CSTP1</name>
</gene>
<comment type="function">
    <text evidence="1">Protein phosphatase that dephosphorylates AKT family kinase specifically at 'Ser-473', blocking cell cycle progression and promoting cell apoptosis. May play an inhibitory role in glucose uptake by adipocytes (By similarity).</text>
</comment>
<comment type="catalytic activity">
    <reaction>
        <text>O-phospho-L-seryl-[protein] + H2O = L-seryl-[protein] + phosphate</text>
        <dbReference type="Rhea" id="RHEA:20629"/>
        <dbReference type="Rhea" id="RHEA-COMP:9863"/>
        <dbReference type="Rhea" id="RHEA-COMP:11604"/>
        <dbReference type="ChEBI" id="CHEBI:15377"/>
        <dbReference type="ChEBI" id="CHEBI:29999"/>
        <dbReference type="ChEBI" id="CHEBI:43474"/>
        <dbReference type="ChEBI" id="CHEBI:83421"/>
        <dbReference type="EC" id="3.1.3.16"/>
    </reaction>
</comment>
<comment type="catalytic activity">
    <reaction>
        <text>O-phospho-L-threonyl-[protein] + H2O = L-threonyl-[protein] + phosphate</text>
        <dbReference type="Rhea" id="RHEA:47004"/>
        <dbReference type="Rhea" id="RHEA-COMP:11060"/>
        <dbReference type="Rhea" id="RHEA-COMP:11605"/>
        <dbReference type="ChEBI" id="CHEBI:15377"/>
        <dbReference type="ChEBI" id="CHEBI:30013"/>
        <dbReference type="ChEBI" id="CHEBI:43474"/>
        <dbReference type="ChEBI" id="CHEBI:61977"/>
        <dbReference type="EC" id="3.1.3.16"/>
    </reaction>
</comment>
<comment type="cofactor">
    <cofactor evidence="1">
        <name>a divalent metal cation</name>
        <dbReference type="ChEBI" id="CHEBI:60240"/>
    </cofactor>
    <text evidence="1">Binds 2 divalent metal cations.</text>
</comment>
<comment type="subcellular location">
    <subcellularLocation>
        <location evidence="1">Cytoplasm</location>
    </subcellularLocation>
</comment>
<comment type="alternative products">
    <event type="alternative splicing"/>
    <isoform>
        <id>Q58DC0-1</id>
        <name>1</name>
        <sequence type="displayed"/>
    </isoform>
    <isoform>
        <id>Q58DC0-2</id>
        <name>2</name>
        <sequence type="described" ref="VSP_031657"/>
    </isoform>
</comment>
<comment type="similarity">
    <text evidence="4">Belongs to the metallophosphoesterase superfamily. CPPED1 family.</text>
</comment>
<evidence type="ECO:0000250" key="1"/>
<evidence type="ECO:0000250" key="2">
    <source>
        <dbReference type="UniProtKB" id="Q9BRF8"/>
    </source>
</evidence>
<evidence type="ECO:0000303" key="3">
    <source ref="2"/>
</evidence>
<evidence type="ECO:0000305" key="4"/>
<organism>
    <name type="scientific">Bos taurus</name>
    <name type="common">Bovine</name>
    <dbReference type="NCBI Taxonomy" id="9913"/>
    <lineage>
        <taxon>Eukaryota</taxon>
        <taxon>Metazoa</taxon>
        <taxon>Chordata</taxon>
        <taxon>Craniata</taxon>
        <taxon>Vertebrata</taxon>
        <taxon>Euteleostomi</taxon>
        <taxon>Mammalia</taxon>
        <taxon>Eutheria</taxon>
        <taxon>Laurasiatheria</taxon>
        <taxon>Artiodactyla</taxon>
        <taxon>Ruminantia</taxon>
        <taxon>Pecora</taxon>
        <taxon>Bovidae</taxon>
        <taxon>Bovinae</taxon>
        <taxon>Bos</taxon>
    </lineage>
</organism>
<dbReference type="EC" id="3.1.3.16"/>
<dbReference type="EMBL" id="BT021677">
    <property type="protein sequence ID" value="AAX46524.1"/>
    <property type="molecule type" value="mRNA"/>
</dbReference>
<dbReference type="EMBL" id="BC133400">
    <property type="protein sequence ID" value="AAI33401.1"/>
    <property type="molecule type" value="mRNA"/>
</dbReference>
<dbReference type="RefSeq" id="NP_001026941.2">
    <property type="nucleotide sequence ID" value="NM_001031771.2"/>
</dbReference>
<dbReference type="SMR" id="Q58DC0"/>
<dbReference type="FunCoup" id="Q58DC0">
    <property type="interactions" value="362"/>
</dbReference>
<dbReference type="STRING" id="9913.ENSBTAP00000071583"/>
<dbReference type="PaxDb" id="9913-ENSBTAP00000007071"/>
<dbReference type="GeneID" id="537938"/>
<dbReference type="KEGG" id="bta:537938"/>
<dbReference type="CTD" id="55313"/>
<dbReference type="eggNOG" id="KOG1378">
    <property type="taxonomic scope" value="Eukaryota"/>
</dbReference>
<dbReference type="HOGENOM" id="CLU_077151_0_0_1"/>
<dbReference type="InParanoid" id="Q58DC0"/>
<dbReference type="OrthoDB" id="45007at2759"/>
<dbReference type="TreeFam" id="TF329406"/>
<dbReference type="Proteomes" id="UP000009136">
    <property type="component" value="Unplaced"/>
</dbReference>
<dbReference type="GO" id="GO:0005737">
    <property type="term" value="C:cytoplasm"/>
    <property type="evidence" value="ECO:0007669"/>
    <property type="project" value="UniProtKB-SubCell"/>
</dbReference>
<dbReference type="GO" id="GO:0046872">
    <property type="term" value="F:metal ion binding"/>
    <property type="evidence" value="ECO:0007669"/>
    <property type="project" value="UniProtKB-KW"/>
</dbReference>
<dbReference type="GO" id="GO:0004722">
    <property type="term" value="F:protein serine/threonine phosphatase activity"/>
    <property type="evidence" value="ECO:0007669"/>
    <property type="project" value="UniProtKB-EC"/>
</dbReference>
<dbReference type="CDD" id="cd07395">
    <property type="entry name" value="MPP_CSTP1"/>
    <property type="match status" value="1"/>
</dbReference>
<dbReference type="Gene3D" id="3.60.21.10">
    <property type="match status" value="1"/>
</dbReference>
<dbReference type="InterPro" id="IPR004843">
    <property type="entry name" value="Calcineurin-like_PHP_ApaH"/>
</dbReference>
<dbReference type="InterPro" id="IPR029052">
    <property type="entry name" value="Metallo-depent_PP-like"/>
</dbReference>
<dbReference type="InterPro" id="IPR041867">
    <property type="entry name" value="MPP_CSTP1"/>
</dbReference>
<dbReference type="InterPro" id="IPR051918">
    <property type="entry name" value="STPP_CPPED1"/>
</dbReference>
<dbReference type="PANTHER" id="PTHR43143">
    <property type="entry name" value="METALLOPHOSPHOESTERASE, CALCINEURIN SUPERFAMILY"/>
    <property type="match status" value="1"/>
</dbReference>
<dbReference type="PANTHER" id="PTHR43143:SF1">
    <property type="entry name" value="SERINE_THREONINE-PROTEIN PHOSPHATASE CPPED1"/>
    <property type="match status" value="1"/>
</dbReference>
<dbReference type="Pfam" id="PF00149">
    <property type="entry name" value="Metallophos"/>
    <property type="match status" value="1"/>
</dbReference>
<dbReference type="SUPFAM" id="SSF56300">
    <property type="entry name" value="Metallo-dependent phosphatases"/>
    <property type="match status" value="1"/>
</dbReference>
<name>CPPED_BOVIN</name>
<proteinExistence type="evidence at transcript level"/>
<keyword id="KW-0025">Alternative splicing</keyword>
<keyword id="KW-0963">Cytoplasm</keyword>
<keyword id="KW-0378">Hydrolase</keyword>
<keyword id="KW-0479">Metal-binding</keyword>
<keyword id="KW-0597">Phosphoprotein</keyword>
<keyword id="KW-1185">Reference proteome</keyword>
<protein>
    <recommendedName>
        <fullName>Serine/threonine-protein phosphatase CPPED1</fullName>
        <ecNumber>3.1.3.16</ecNumber>
    </recommendedName>
    <alternativeName>
        <fullName>Calcineurin-like phosphoesterase domain-containing protein 1</fullName>
    </alternativeName>
</protein>